<gene>
    <name evidence="1" type="primary">rplL</name>
    <name type="ordered locus">PBPRA3433</name>
</gene>
<accession>Q6LLW1</accession>
<protein>
    <recommendedName>
        <fullName evidence="1">Large ribosomal subunit protein bL12</fullName>
    </recommendedName>
    <alternativeName>
        <fullName evidence="2">50S ribosomal protein L7/L12</fullName>
    </alternativeName>
</protein>
<name>RL7_PHOPR</name>
<sequence length="129" mass="13267">MLISKRIVMSITNEQILDAVADMSVMQVVELIEAMEEKFGVTAAAAVVAGGAAAEAAEEQTEFDVILTAVGAQKVQVIKAVRGATGLGLKEAKAVVDSAPASVKEGVDKAEAEALKAQLEEVGASVEIK</sequence>
<feature type="chain" id="PRO_0000243462" description="Large ribosomal subunit protein bL12">
    <location>
        <begin position="1"/>
        <end position="129"/>
    </location>
</feature>
<evidence type="ECO:0000255" key="1">
    <source>
        <dbReference type="HAMAP-Rule" id="MF_00368"/>
    </source>
</evidence>
<evidence type="ECO:0000305" key="2"/>
<dbReference type="EMBL" id="CR378674">
    <property type="protein sequence ID" value="CAG21717.1"/>
    <property type="molecule type" value="Genomic_DNA"/>
</dbReference>
<dbReference type="SMR" id="Q6LLW1"/>
<dbReference type="STRING" id="298386.PBPRA3433"/>
<dbReference type="KEGG" id="ppr:PBPRA3433"/>
<dbReference type="eggNOG" id="COG0222">
    <property type="taxonomic scope" value="Bacteria"/>
</dbReference>
<dbReference type="HOGENOM" id="CLU_086499_3_2_6"/>
<dbReference type="Proteomes" id="UP000000593">
    <property type="component" value="Chromosome 1"/>
</dbReference>
<dbReference type="GO" id="GO:0022625">
    <property type="term" value="C:cytosolic large ribosomal subunit"/>
    <property type="evidence" value="ECO:0007669"/>
    <property type="project" value="TreeGrafter"/>
</dbReference>
<dbReference type="GO" id="GO:0003729">
    <property type="term" value="F:mRNA binding"/>
    <property type="evidence" value="ECO:0007669"/>
    <property type="project" value="TreeGrafter"/>
</dbReference>
<dbReference type="GO" id="GO:0003735">
    <property type="term" value="F:structural constituent of ribosome"/>
    <property type="evidence" value="ECO:0007669"/>
    <property type="project" value="InterPro"/>
</dbReference>
<dbReference type="GO" id="GO:0006412">
    <property type="term" value="P:translation"/>
    <property type="evidence" value="ECO:0007669"/>
    <property type="project" value="UniProtKB-UniRule"/>
</dbReference>
<dbReference type="CDD" id="cd00387">
    <property type="entry name" value="Ribosomal_L7_L12"/>
    <property type="match status" value="1"/>
</dbReference>
<dbReference type="FunFam" id="1.20.5.710:FF:000001">
    <property type="entry name" value="50S ribosomal protein L7/L12"/>
    <property type="match status" value="1"/>
</dbReference>
<dbReference type="FunFam" id="3.30.1390.10:FF:000001">
    <property type="entry name" value="50S ribosomal protein L7/L12"/>
    <property type="match status" value="1"/>
</dbReference>
<dbReference type="Gene3D" id="3.30.1390.10">
    <property type="match status" value="1"/>
</dbReference>
<dbReference type="Gene3D" id="1.20.5.710">
    <property type="entry name" value="Single helix bin"/>
    <property type="match status" value="1"/>
</dbReference>
<dbReference type="HAMAP" id="MF_00368">
    <property type="entry name" value="Ribosomal_bL12"/>
    <property type="match status" value="1"/>
</dbReference>
<dbReference type="InterPro" id="IPR000206">
    <property type="entry name" value="Ribosomal_bL12"/>
</dbReference>
<dbReference type="InterPro" id="IPR013823">
    <property type="entry name" value="Ribosomal_bL12_C"/>
</dbReference>
<dbReference type="InterPro" id="IPR014719">
    <property type="entry name" value="Ribosomal_bL12_C/ClpS-like"/>
</dbReference>
<dbReference type="InterPro" id="IPR008932">
    <property type="entry name" value="Ribosomal_bL12_oligo"/>
</dbReference>
<dbReference type="InterPro" id="IPR036235">
    <property type="entry name" value="Ribosomal_bL12_oligo_N_sf"/>
</dbReference>
<dbReference type="NCBIfam" id="TIGR00855">
    <property type="entry name" value="L12"/>
    <property type="match status" value="1"/>
</dbReference>
<dbReference type="PANTHER" id="PTHR45987">
    <property type="entry name" value="39S RIBOSOMAL PROTEIN L12"/>
    <property type="match status" value="1"/>
</dbReference>
<dbReference type="PANTHER" id="PTHR45987:SF4">
    <property type="entry name" value="LARGE RIBOSOMAL SUBUNIT PROTEIN BL12M"/>
    <property type="match status" value="1"/>
</dbReference>
<dbReference type="Pfam" id="PF00542">
    <property type="entry name" value="Ribosomal_L12"/>
    <property type="match status" value="1"/>
</dbReference>
<dbReference type="Pfam" id="PF16320">
    <property type="entry name" value="Ribosomal_L12_N"/>
    <property type="match status" value="1"/>
</dbReference>
<dbReference type="SUPFAM" id="SSF54736">
    <property type="entry name" value="ClpS-like"/>
    <property type="match status" value="1"/>
</dbReference>
<dbReference type="SUPFAM" id="SSF48300">
    <property type="entry name" value="Ribosomal protein L7/12, oligomerisation (N-terminal) domain"/>
    <property type="match status" value="1"/>
</dbReference>
<proteinExistence type="inferred from homology"/>
<reference key="1">
    <citation type="journal article" date="2005" name="Science">
        <title>Life at depth: Photobacterium profundum genome sequence and expression analysis.</title>
        <authorList>
            <person name="Vezzi A."/>
            <person name="Campanaro S."/>
            <person name="D'Angelo M."/>
            <person name="Simonato F."/>
            <person name="Vitulo N."/>
            <person name="Lauro F.M."/>
            <person name="Cestaro A."/>
            <person name="Malacrida G."/>
            <person name="Simionati B."/>
            <person name="Cannata N."/>
            <person name="Romualdi C."/>
            <person name="Bartlett D.H."/>
            <person name="Valle G."/>
        </authorList>
    </citation>
    <scope>NUCLEOTIDE SEQUENCE [LARGE SCALE GENOMIC DNA]</scope>
    <source>
        <strain>ATCC BAA-1253 / SS9</strain>
    </source>
</reference>
<organism>
    <name type="scientific">Photobacterium profundum (strain SS9)</name>
    <dbReference type="NCBI Taxonomy" id="298386"/>
    <lineage>
        <taxon>Bacteria</taxon>
        <taxon>Pseudomonadati</taxon>
        <taxon>Pseudomonadota</taxon>
        <taxon>Gammaproteobacteria</taxon>
        <taxon>Vibrionales</taxon>
        <taxon>Vibrionaceae</taxon>
        <taxon>Photobacterium</taxon>
    </lineage>
</organism>
<comment type="function">
    <text evidence="1">Forms part of the ribosomal stalk which helps the ribosome interact with GTP-bound translation factors. Is thus essential for accurate translation.</text>
</comment>
<comment type="subunit">
    <text evidence="1">Homodimer. Part of the ribosomal stalk of the 50S ribosomal subunit. Forms a multimeric L10(L12)X complex, where L10 forms an elongated spine to which 2 to 4 L12 dimers bind in a sequential fashion. Binds GTP-bound translation factors.</text>
</comment>
<comment type="similarity">
    <text evidence="1">Belongs to the bacterial ribosomal protein bL12 family.</text>
</comment>
<keyword id="KW-1185">Reference proteome</keyword>
<keyword id="KW-0687">Ribonucleoprotein</keyword>
<keyword id="KW-0689">Ribosomal protein</keyword>